<proteinExistence type="evidence at protein level"/>
<accession>Q7ZAP3</accession>
<accession>P96059</accession>
<sequence>MNRIHAVILDWAGTTVDFGSFAPTQIFVEAFRQAFDVEITLAEARVPMGLGKWQHIEALGKLPAVDARWQAKFGRSMSAADIDAIYAAFMPLQIAKVVDFSSPIAGVIDTIAALRAEGIKIGSCSGYPRAVMERLVPAAAGHGYRPDHWVATDDLAAGGRPGPWMALQNVIALGIDAVAHCVKVDDAAPGISEGLNAGMWTVGLAVSGNEFGATWDAYQTMSKEDVAVRREHAASKLYAAGAHYVVDSLADLPGVIAHINARLAQGERP</sequence>
<reference key="1">
    <citation type="journal article" date="1998" name="Biochemistry">
        <title>Insights into the mechanism of catalysis by the P-C bond-cleaving enzyme phosphonoacetaldehyde hydrolase derived from gene sequence analysis and mutagenesis.</title>
        <authorList>
            <person name="Baker A.S."/>
            <person name="Ciocci M.J."/>
            <person name="Metcalf W.W."/>
            <person name="Kim J."/>
            <person name="Babbitt P.C."/>
            <person name="Wanner B.L."/>
            <person name="Martin B.M."/>
            <person name="Dunaway-Mariano D."/>
        </authorList>
    </citation>
    <scope>NUCLEOTIDE SEQUENCE [GENOMIC DNA]</scope>
    <scope>PROTEIN SEQUENCE OF 1-9</scope>
    <scope>BIOPHYSICAL CHARACTERIZATION</scope>
    <scope>REACTION MECHANISM</scope>
    <scope>SCHIFF BASE</scope>
    <scope>MUTAGENESIS OF LYS-52</scope>
    <source>
        <strain>LT2</strain>
    </source>
</reference>
<reference key="2">
    <citation type="journal article" date="2001" name="Nature">
        <title>Complete genome sequence of Salmonella enterica serovar Typhimurium LT2.</title>
        <authorList>
            <person name="McClelland M."/>
            <person name="Sanderson K.E."/>
            <person name="Spieth J."/>
            <person name="Clifton S.W."/>
            <person name="Latreille P."/>
            <person name="Courtney L."/>
            <person name="Porwollik S."/>
            <person name="Ali J."/>
            <person name="Dante M."/>
            <person name="Du F."/>
            <person name="Hou S."/>
            <person name="Layman D."/>
            <person name="Leonard S."/>
            <person name="Nguyen C."/>
            <person name="Scott K."/>
            <person name="Holmes A."/>
            <person name="Grewal N."/>
            <person name="Mulvaney E."/>
            <person name="Ryan E."/>
            <person name="Sun H."/>
            <person name="Florea L."/>
            <person name="Miller W."/>
            <person name="Stoneking T."/>
            <person name="Nhan M."/>
            <person name="Waterston R."/>
            <person name="Wilson R.K."/>
        </authorList>
    </citation>
    <scope>NUCLEOTIDE SEQUENCE [LARGE SCALE GENOMIC DNA]</scope>
    <source>
        <strain>LT2 / SGSC1412 / ATCC 700720</strain>
    </source>
</reference>
<reference key="3">
    <citation type="journal article" date="1995" name="J. Bacteriol.">
        <title>Molecular cloning, mapping, and regulation of Pho regulon genes for phosphonate breakdown by the phosphonatase pathway of Salmonella typhimurium LT2.</title>
        <authorList>
            <person name="Jiang W."/>
            <person name="Metcalf W.W."/>
            <person name="Lee K.-S."/>
            <person name="Wanner B.L."/>
        </authorList>
    </citation>
    <scope>CHARACTERIZATION</scope>
    <scope>CLONING</scope>
    <scope>INDUCTION</scope>
    <source>
        <strain>LT2</strain>
    </source>
</reference>
<name>PHNX_SALTY</name>
<feature type="chain" id="PRO_0000284601" description="Phosphonoacetaldehyde hydrolase">
    <location>
        <begin position="1"/>
        <end position="269"/>
    </location>
</feature>
<feature type="active site" description="Nucleophile" evidence="1">
    <location>
        <position position="10"/>
    </location>
</feature>
<feature type="active site" description="Schiff-base intermediate with substrate">
    <location>
        <position position="52"/>
    </location>
</feature>
<feature type="binding site" evidence="1">
    <location>
        <position position="10"/>
    </location>
    <ligand>
        <name>Mg(2+)</name>
        <dbReference type="ChEBI" id="CHEBI:18420"/>
    </ligand>
</feature>
<feature type="binding site" evidence="1">
    <location>
        <position position="12"/>
    </location>
    <ligand>
        <name>Mg(2+)</name>
        <dbReference type="ChEBI" id="CHEBI:18420"/>
    </ligand>
</feature>
<feature type="binding site" evidence="1">
    <location>
        <position position="186"/>
    </location>
    <ligand>
        <name>Mg(2+)</name>
        <dbReference type="ChEBI" id="CHEBI:18420"/>
    </ligand>
</feature>
<feature type="mutagenesis site" description="Complete loss of catalytic activity." evidence="3">
    <original>K</original>
    <variation>R</variation>
    <location>
        <position position="52"/>
    </location>
</feature>
<feature type="sequence conflict" description="In Ref. 1; AAB39641." evidence="4" ref="1">
    <original>AHYVVDSLADLPGVIAHINARLAQ</original>
    <variation>RITWWIHWRIYL</variation>
    <location>
        <begin position="242"/>
        <end position="265"/>
    </location>
</feature>
<dbReference type="EC" id="3.11.1.1"/>
<dbReference type="EMBL" id="U69493">
    <property type="protein sequence ID" value="AAB39641.1"/>
    <property type="status" value="ALT_INIT"/>
    <property type="molecule type" value="Genomic_DNA"/>
</dbReference>
<dbReference type="EMBL" id="AE006468">
    <property type="protein sequence ID" value="AAL19386.1"/>
    <property type="status" value="ALT_INIT"/>
    <property type="molecule type" value="Genomic_DNA"/>
</dbReference>
<dbReference type="PIR" id="T46946">
    <property type="entry name" value="T46946"/>
</dbReference>
<dbReference type="RefSeq" id="NP_459427.1">
    <property type="nucleotide sequence ID" value="NC_003197.2"/>
</dbReference>
<dbReference type="RefSeq" id="WP_000981902.1">
    <property type="nucleotide sequence ID" value="NC_003197.2"/>
</dbReference>
<dbReference type="SMR" id="Q7ZAP3"/>
<dbReference type="STRING" id="99287.STM0432"/>
<dbReference type="PaxDb" id="99287-STM0432"/>
<dbReference type="GeneID" id="1251951"/>
<dbReference type="KEGG" id="stm:STM0432"/>
<dbReference type="PATRIC" id="fig|99287.12.peg.461"/>
<dbReference type="HOGENOM" id="CLU_045011_12_0_6"/>
<dbReference type="OMA" id="GRPAPWM"/>
<dbReference type="PhylomeDB" id="Q7ZAP3"/>
<dbReference type="BRENDA" id="3.11.1.1">
    <property type="organism ID" value="5542"/>
</dbReference>
<dbReference type="Proteomes" id="UP000001014">
    <property type="component" value="Chromosome"/>
</dbReference>
<dbReference type="GO" id="GO:0005829">
    <property type="term" value="C:cytosol"/>
    <property type="evidence" value="ECO:0000318"/>
    <property type="project" value="GO_Central"/>
</dbReference>
<dbReference type="GO" id="GO:0000287">
    <property type="term" value="F:magnesium ion binding"/>
    <property type="evidence" value="ECO:0007669"/>
    <property type="project" value="UniProtKB-UniRule"/>
</dbReference>
<dbReference type="GO" id="GO:0008967">
    <property type="term" value="F:phosphoglycolate phosphatase activity"/>
    <property type="evidence" value="ECO:0000318"/>
    <property type="project" value="GO_Central"/>
</dbReference>
<dbReference type="GO" id="GO:0050194">
    <property type="term" value="F:phosphonoacetaldehyde hydrolase activity"/>
    <property type="evidence" value="ECO:0007669"/>
    <property type="project" value="UniProtKB-UniRule"/>
</dbReference>
<dbReference type="GO" id="GO:0006281">
    <property type="term" value="P:DNA repair"/>
    <property type="evidence" value="ECO:0000318"/>
    <property type="project" value="GO_Central"/>
</dbReference>
<dbReference type="GO" id="GO:0019700">
    <property type="term" value="P:organic phosphonate catabolic process"/>
    <property type="evidence" value="ECO:0007669"/>
    <property type="project" value="InterPro"/>
</dbReference>
<dbReference type="CDD" id="cd02586">
    <property type="entry name" value="HAD_PHN"/>
    <property type="match status" value="1"/>
</dbReference>
<dbReference type="FunFam" id="1.10.150.240:FF:000006">
    <property type="entry name" value="Phosphonoacetaldehyde hydrolase"/>
    <property type="match status" value="1"/>
</dbReference>
<dbReference type="FunFam" id="3.40.50.1000:FF:000072">
    <property type="entry name" value="Phosphonoacetaldehyde hydrolase"/>
    <property type="match status" value="1"/>
</dbReference>
<dbReference type="Gene3D" id="3.40.50.1000">
    <property type="entry name" value="HAD superfamily/HAD-like"/>
    <property type="match status" value="1"/>
</dbReference>
<dbReference type="Gene3D" id="1.10.150.240">
    <property type="entry name" value="Putative phosphatase, domain 2"/>
    <property type="match status" value="1"/>
</dbReference>
<dbReference type="HAMAP" id="MF_01375">
    <property type="entry name" value="PhnX"/>
    <property type="match status" value="1"/>
</dbReference>
<dbReference type="InterPro" id="IPR050155">
    <property type="entry name" value="HAD-like_hydrolase_sf"/>
</dbReference>
<dbReference type="InterPro" id="IPR036412">
    <property type="entry name" value="HAD-like_sf"/>
</dbReference>
<dbReference type="InterPro" id="IPR006439">
    <property type="entry name" value="HAD-SF_hydro_IA"/>
</dbReference>
<dbReference type="InterPro" id="IPR023214">
    <property type="entry name" value="HAD_sf"/>
</dbReference>
<dbReference type="InterPro" id="IPR023198">
    <property type="entry name" value="PGP-like_dom2"/>
</dbReference>
<dbReference type="InterPro" id="IPR006323">
    <property type="entry name" value="Phosphonoacetald_hydro"/>
</dbReference>
<dbReference type="NCBIfam" id="TIGR01509">
    <property type="entry name" value="HAD-SF-IA-v3"/>
    <property type="match status" value="1"/>
</dbReference>
<dbReference type="NCBIfam" id="TIGR01422">
    <property type="entry name" value="phosphonatase"/>
    <property type="match status" value="1"/>
</dbReference>
<dbReference type="PANTHER" id="PTHR43434">
    <property type="entry name" value="PHOSPHOGLYCOLATE PHOSPHATASE"/>
    <property type="match status" value="1"/>
</dbReference>
<dbReference type="PANTHER" id="PTHR43434:SF19">
    <property type="entry name" value="PHOSPHONOACETALDEHYDE HYDROLASE"/>
    <property type="match status" value="1"/>
</dbReference>
<dbReference type="Pfam" id="PF00702">
    <property type="entry name" value="Hydrolase"/>
    <property type="match status" value="1"/>
</dbReference>
<dbReference type="SFLD" id="SFLDG01135">
    <property type="entry name" value="C1.5.6:_HAD__Beta-PGM__Phospha"/>
    <property type="match status" value="1"/>
</dbReference>
<dbReference type="SFLD" id="SFLDF00038">
    <property type="entry name" value="phosphonoacetaldehyde_hydrolas"/>
    <property type="match status" value="1"/>
</dbReference>
<dbReference type="SUPFAM" id="SSF56784">
    <property type="entry name" value="HAD-like"/>
    <property type="match status" value="1"/>
</dbReference>
<organism>
    <name type="scientific">Salmonella typhimurium (strain LT2 / SGSC1412 / ATCC 700720)</name>
    <dbReference type="NCBI Taxonomy" id="99287"/>
    <lineage>
        <taxon>Bacteria</taxon>
        <taxon>Pseudomonadati</taxon>
        <taxon>Pseudomonadota</taxon>
        <taxon>Gammaproteobacteria</taxon>
        <taxon>Enterobacterales</taxon>
        <taxon>Enterobacteriaceae</taxon>
        <taxon>Salmonella</taxon>
    </lineage>
</organism>
<evidence type="ECO:0000250" key="1"/>
<evidence type="ECO:0000269" key="2">
    <source>
    </source>
</evidence>
<evidence type="ECO:0000269" key="3">
    <source>
    </source>
</evidence>
<evidence type="ECO:0000305" key="4"/>
<comment type="function">
    <text>Involved in phosphonate degradation.</text>
</comment>
<comment type="catalytic activity">
    <reaction>
        <text>phosphonoacetaldehyde + H2O = acetaldehyde + phosphate + H(+)</text>
        <dbReference type="Rhea" id="RHEA:18905"/>
        <dbReference type="ChEBI" id="CHEBI:15343"/>
        <dbReference type="ChEBI" id="CHEBI:15377"/>
        <dbReference type="ChEBI" id="CHEBI:15378"/>
        <dbReference type="ChEBI" id="CHEBI:43474"/>
        <dbReference type="ChEBI" id="CHEBI:58383"/>
        <dbReference type="EC" id="3.11.1.1"/>
    </reaction>
</comment>
<comment type="cofactor">
    <cofactor evidence="1">
        <name>Mg(2+)</name>
        <dbReference type="ChEBI" id="CHEBI:18420"/>
    </cofactor>
    <text evidence="1">Binds 1 Mg(2+) ion per subunit.</text>
</comment>
<comment type="biophysicochemical properties">
    <kinetics>
        <KM>40 uM for phosphonoacetaldehyde (at pH 7.0, 25 degrees Celsius)</KM>
    </kinetics>
</comment>
<comment type="subunit">
    <text evidence="1">Homodimer.</text>
</comment>
<comment type="induction">
    <text evidence="2">Induced when inorganic phosphate is limiting; this is controlled by PhoB.</text>
</comment>
<comment type="miscellaneous">
    <text>Maps to a phosphate-starvation-inducible locus previously known as psiC.</text>
</comment>
<comment type="similarity">
    <text evidence="4">Belongs to the HAD-like hydrolase superfamily. PhnX family.</text>
</comment>
<comment type="sequence caution" evidence="4">
    <conflict type="erroneous initiation">
        <sequence resource="EMBL-CDS" id="AAB39641"/>
    </conflict>
</comment>
<comment type="sequence caution" evidence="4">
    <conflict type="erroneous initiation">
        <sequence resource="EMBL-CDS" id="AAL19386"/>
    </conflict>
</comment>
<keyword id="KW-0903">Direct protein sequencing</keyword>
<keyword id="KW-0378">Hydrolase</keyword>
<keyword id="KW-0460">Magnesium</keyword>
<keyword id="KW-0479">Metal-binding</keyword>
<keyword id="KW-1185">Reference proteome</keyword>
<keyword id="KW-0704">Schiff base</keyword>
<gene>
    <name type="primary">phnX</name>
    <name type="ordered locus">STM0432</name>
</gene>
<protein>
    <recommendedName>
        <fullName>Phosphonoacetaldehyde hydrolase</fullName>
        <shortName>Phosphonatase</shortName>
        <ecNumber>3.11.1.1</ecNumber>
    </recommendedName>
    <alternativeName>
        <fullName>Phosphonoacetaldehyde phosphonohydrolase</fullName>
    </alternativeName>
</protein>